<name>DARCY_CHRVO</name>
<sequence length="79" mass="9290">MKPIYARYPEVRMRWFDAEAFSARCSDVAMFETESVPAFYYLIDALRDSPLMTEPYFEFVDIIPAVEDGFRDYDAQLAQ</sequence>
<proteinExistence type="inferred from homology"/>
<gene>
    <name type="ordered locus">CV_4311</name>
</gene>
<evidence type="ECO:0000305" key="1"/>
<protein>
    <recommendedName>
        <fullName>Darcynin</fullName>
    </recommendedName>
</protein>
<dbReference type="EMBL" id="AE016825">
    <property type="protein sequence ID" value="AAQ64070.1"/>
    <property type="molecule type" value="Genomic_DNA"/>
</dbReference>
<dbReference type="STRING" id="243365.CV_4311"/>
<dbReference type="KEGG" id="cvi:CV_4311"/>
<dbReference type="HOGENOM" id="CLU_165974_0_0_4"/>
<dbReference type="Proteomes" id="UP000001424">
    <property type="component" value="Chromosome"/>
</dbReference>
<dbReference type="InterPro" id="IPR031409">
    <property type="entry name" value="Darcynin"/>
</dbReference>
<dbReference type="Pfam" id="PF17074">
    <property type="entry name" value="Darcynin"/>
    <property type="match status" value="1"/>
</dbReference>
<feature type="chain" id="PRO_0000220203" description="Darcynin">
    <location>
        <begin position="1"/>
        <end position="79"/>
    </location>
</feature>
<accession>Q7NPQ6</accession>
<organism>
    <name type="scientific">Chromobacterium violaceum (strain ATCC 12472 / DSM 30191 / JCM 1249 / CCUG 213 / NBRC 12614 / NCIMB 9131 / NCTC 9757 / MK)</name>
    <dbReference type="NCBI Taxonomy" id="243365"/>
    <lineage>
        <taxon>Bacteria</taxon>
        <taxon>Pseudomonadati</taxon>
        <taxon>Pseudomonadota</taxon>
        <taxon>Betaproteobacteria</taxon>
        <taxon>Neisseriales</taxon>
        <taxon>Chromobacteriaceae</taxon>
        <taxon>Chromobacterium</taxon>
    </lineage>
</organism>
<reference key="1">
    <citation type="journal article" date="2003" name="Proc. Natl. Acad. Sci. U.S.A.">
        <title>The complete genome sequence of Chromobacterium violaceum reveals remarkable and exploitable bacterial adaptability.</title>
        <authorList>
            <person name="Vasconcelos A.T.R."/>
            <person name="de Almeida D.F."/>
            <person name="Hungria M."/>
            <person name="Guimaraes C.T."/>
            <person name="Antonio R.V."/>
            <person name="Almeida F.C."/>
            <person name="de Almeida L.G.P."/>
            <person name="de Almeida R."/>
            <person name="Alves-Gomes J.A."/>
            <person name="Andrade E.M."/>
            <person name="Araripe J."/>
            <person name="de Araujo M.F.F."/>
            <person name="Astolfi-Filho S."/>
            <person name="Azevedo V."/>
            <person name="Baptista A.J."/>
            <person name="Bataus L.A.M."/>
            <person name="Batista J.S."/>
            <person name="Belo A."/>
            <person name="van den Berg C."/>
            <person name="Bogo M."/>
            <person name="Bonatto S."/>
            <person name="Bordignon J."/>
            <person name="Brigido M.M."/>
            <person name="Brito C.A."/>
            <person name="Brocchi M."/>
            <person name="Burity H.A."/>
            <person name="Camargo A.A."/>
            <person name="Cardoso D.D.P."/>
            <person name="Carneiro N.P."/>
            <person name="Carraro D.M."/>
            <person name="Carvalho C.M.B."/>
            <person name="Cascardo J.C.M."/>
            <person name="Cavada B.S."/>
            <person name="Chueire L.M.O."/>
            <person name="Creczynski-Pasa T.B."/>
            <person name="Cunha-Junior N.C."/>
            <person name="Fagundes N."/>
            <person name="Falcao C.L."/>
            <person name="Fantinatti F."/>
            <person name="Farias I.P."/>
            <person name="Felipe M.S.S."/>
            <person name="Ferrari L.P."/>
            <person name="Ferro J.A."/>
            <person name="Ferro M.I.T."/>
            <person name="Franco G.R."/>
            <person name="Freitas N.S.A."/>
            <person name="Furlan L.R."/>
            <person name="Gazzinelli R.T."/>
            <person name="Gomes E.A."/>
            <person name="Goncalves P.R."/>
            <person name="Grangeiro T.B."/>
            <person name="Grattapaglia D."/>
            <person name="Grisard E.C."/>
            <person name="Hanna E.S."/>
            <person name="Jardim S.N."/>
            <person name="Laurino J."/>
            <person name="Leoi L.C.T."/>
            <person name="Lima L.F.A."/>
            <person name="Loureiro M.F."/>
            <person name="Lyra M.C.C.P."/>
            <person name="Madeira H.M.F."/>
            <person name="Manfio G.P."/>
            <person name="Maranhao A.Q."/>
            <person name="Martins W.S."/>
            <person name="di Mauro S.M.Z."/>
            <person name="de Medeiros S.R.B."/>
            <person name="Meissner R.V."/>
            <person name="Moreira M.A.M."/>
            <person name="Nascimento F.F."/>
            <person name="Nicolas M.F."/>
            <person name="Oliveira J.G."/>
            <person name="Oliveira S.C."/>
            <person name="Paixao R.F.C."/>
            <person name="Parente J.A."/>
            <person name="Pedrosa F.O."/>
            <person name="Pena S.D.J."/>
            <person name="Pereira J.O."/>
            <person name="Pereira M."/>
            <person name="Pinto L.S.R.C."/>
            <person name="Pinto L.S."/>
            <person name="Porto J.I.R."/>
            <person name="Potrich D.P."/>
            <person name="Ramalho-Neto C.E."/>
            <person name="Reis A.M.M."/>
            <person name="Rigo L.U."/>
            <person name="Rondinelli E."/>
            <person name="Santos E.B.P."/>
            <person name="Santos F.R."/>
            <person name="Schneider M.P.C."/>
            <person name="Seuanez H.N."/>
            <person name="Silva A.M.R."/>
            <person name="da Silva A.L.C."/>
            <person name="Silva D.W."/>
            <person name="Silva R."/>
            <person name="Simoes I.C."/>
            <person name="Simon D."/>
            <person name="Soares C.M.A."/>
            <person name="Soares R.B.A."/>
            <person name="Souza E.M."/>
            <person name="Souza K.R.L."/>
            <person name="Souza R.C."/>
            <person name="Steffens M.B.R."/>
            <person name="Steindel M."/>
            <person name="Teixeira S.R."/>
            <person name="Urmenyi T."/>
            <person name="Vettore A."/>
            <person name="Wassem R."/>
            <person name="Zaha A."/>
            <person name="Simpson A.J.G."/>
        </authorList>
    </citation>
    <scope>NUCLEOTIDE SEQUENCE [LARGE SCALE GENOMIC DNA]</scope>
    <source>
        <strain>ATCC 12472 / DSM 30191 / JCM 1249 / CCUG 213 / NBRC 12614 / NCIMB 9131 / NCTC 9757 / MK</strain>
    </source>
</reference>
<comment type="similarity">
    <text evidence="1">Belongs to the darcynin family.</text>
</comment>
<keyword id="KW-1185">Reference proteome</keyword>